<feature type="chain" id="PRO_0000393992" description="Enolase-phosphatase E1">
    <location>
        <begin position="1"/>
        <end position="271"/>
    </location>
</feature>
<feature type="binding site" evidence="1">
    <location>
        <position position="18"/>
    </location>
    <ligand>
        <name>Mg(2+)</name>
        <dbReference type="ChEBI" id="CHEBI:18420"/>
    </ligand>
</feature>
<feature type="binding site" evidence="1">
    <location>
        <position position="20"/>
    </location>
    <ligand>
        <name>Mg(2+)</name>
        <dbReference type="ChEBI" id="CHEBI:18420"/>
    </ligand>
</feature>
<feature type="binding site" evidence="1">
    <location>
        <begin position="144"/>
        <end position="145"/>
    </location>
    <ligand>
        <name>substrate</name>
    </ligand>
</feature>
<feature type="binding site" evidence="1">
    <location>
        <position position="194"/>
    </location>
    <ligand>
        <name>substrate</name>
    </ligand>
</feature>
<feature type="binding site" evidence="1">
    <location>
        <position position="221"/>
    </location>
    <ligand>
        <name>Mg(2+)</name>
        <dbReference type="ChEBI" id="CHEBI:18420"/>
    </ligand>
</feature>
<comment type="function">
    <text evidence="1">Bifunctional enzyme that catalyzes the enolization of 2,3-diketo-5-methylthiopentyl-1-phosphate (DK-MTP-1-P) into the intermediate 2-hydroxy-3-keto-5-methylthiopentenyl-1-phosphate (HK-MTPenyl-1-P), which is then dephosphorylated to form the acireductone 1,2-dihydroxy-3-keto-5-methylthiopentene (DHK-MTPene).</text>
</comment>
<comment type="catalytic activity">
    <reaction evidence="1">
        <text>5-methylsulfanyl-2,3-dioxopentyl phosphate + H2O = 1,2-dihydroxy-5-(methylsulfanyl)pent-1-en-3-one + phosphate</text>
        <dbReference type="Rhea" id="RHEA:21700"/>
        <dbReference type="ChEBI" id="CHEBI:15377"/>
        <dbReference type="ChEBI" id="CHEBI:43474"/>
        <dbReference type="ChEBI" id="CHEBI:49252"/>
        <dbReference type="ChEBI" id="CHEBI:58828"/>
        <dbReference type="EC" id="3.1.3.77"/>
    </reaction>
</comment>
<comment type="cofactor">
    <cofactor evidence="1">
        <name>Mg(2+)</name>
        <dbReference type="ChEBI" id="CHEBI:18420"/>
    </cofactor>
    <text evidence="1">Binds 1 Mg(2+) ion per subunit.</text>
</comment>
<comment type="pathway">
    <text evidence="1">Amino-acid biosynthesis; L-methionine biosynthesis via salvage pathway; L-methionine from S-methyl-5-thio-alpha-D-ribose 1-phosphate: step 3/6.</text>
</comment>
<comment type="pathway">
    <text evidence="1">Amino-acid biosynthesis; L-methionine biosynthesis via salvage pathway; L-methionine from S-methyl-5-thio-alpha-D-ribose 1-phosphate: step 4/6.</text>
</comment>
<comment type="subunit">
    <text evidence="1">Monomer.</text>
</comment>
<comment type="subcellular location">
    <subcellularLocation>
        <location evidence="1">Cytoplasm</location>
    </subcellularLocation>
    <subcellularLocation>
        <location evidence="1">Nucleus</location>
    </subcellularLocation>
</comment>
<comment type="similarity">
    <text evidence="1">Belongs to the HAD-like hydrolase superfamily. MasA/MtnC family.</text>
</comment>
<reference key="1">
    <citation type="journal article" date="2009" name="Nature">
        <title>Evolution of pathogenicity and sexual reproduction in eight Candida genomes.</title>
        <authorList>
            <person name="Butler G."/>
            <person name="Rasmussen M.D."/>
            <person name="Lin M.F."/>
            <person name="Santos M.A.S."/>
            <person name="Sakthikumar S."/>
            <person name="Munro C.A."/>
            <person name="Rheinbay E."/>
            <person name="Grabherr M."/>
            <person name="Forche A."/>
            <person name="Reedy J.L."/>
            <person name="Agrafioti I."/>
            <person name="Arnaud M.B."/>
            <person name="Bates S."/>
            <person name="Brown A.J.P."/>
            <person name="Brunke S."/>
            <person name="Costanzo M.C."/>
            <person name="Fitzpatrick D.A."/>
            <person name="de Groot P.W.J."/>
            <person name="Harris D."/>
            <person name="Hoyer L.L."/>
            <person name="Hube B."/>
            <person name="Klis F.M."/>
            <person name="Kodira C."/>
            <person name="Lennard N."/>
            <person name="Logue M.E."/>
            <person name="Martin R."/>
            <person name="Neiman A.M."/>
            <person name="Nikolaou E."/>
            <person name="Quail M.A."/>
            <person name="Quinn J."/>
            <person name="Santos M.C."/>
            <person name="Schmitzberger F.F."/>
            <person name="Sherlock G."/>
            <person name="Shah P."/>
            <person name="Silverstein K.A.T."/>
            <person name="Skrzypek M.S."/>
            <person name="Soll D."/>
            <person name="Staggs R."/>
            <person name="Stansfield I."/>
            <person name="Stumpf M.P.H."/>
            <person name="Sudbery P.E."/>
            <person name="Srikantha T."/>
            <person name="Zeng Q."/>
            <person name="Berman J."/>
            <person name="Berriman M."/>
            <person name="Heitman J."/>
            <person name="Gow N.A.R."/>
            <person name="Lorenz M.C."/>
            <person name="Birren B.W."/>
            <person name="Kellis M."/>
            <person name="Cuomo C.A."/>
        </authorList>
    </citation>
    <scope>NUCLEOTIDE SEQUENCE [LARGE SCALE GENOMIC DNA]</scope>
    <source>
        <strain>WO-1</strain>
    </source>
</reference>
<organism>
    <name type="scientific">Candida albicans (strain WO-1)</name>
    <name type="common">Yeast</name>
    <dbReference type="NCBI Taxonomy" id="294748"/>
    <lineage>
        <taxon>Eukaryota</taxon>
        <taxon>Fungi</taxon>
        <taxon>Dikarya</taxon>
        <taxon>Ascomycota</taxon>
        <taxon>Saccharomycotina</taxon>
        <taxon>Pichiomycetes</taxon>
        <taxon>Debaryomycetaceae</taxon>
        <taxon>Candida/Lodderomyces clade</taxon>
        <taxon>Candida</taxon>
    </lineage>
</organism>
<evidence type="ECO:0000255" key="1">
    <source>
        <dbReference type="HAMAP-Rule" id="MF_03117"/>
    </source>
</evidence>
<gene>
    <name evidence="1" type="primary">UTR4</name>
    <name type="ORF">CAWG_03954</name>
</gene>
<name>ENOPH_CANAW</name>
<sequence length="271" mass="30364">MTTTAKTDDIPIDTVILDIEGTVCPITFVKDTLFPYFIEKLPSILDKFQYPLSNTSASSDDQVLNILKQLPDNITKSSESIYKHFKNLVDQDIKDPILKSLQGLIWKQGYENNELQAPIYQDSVEFIESFPTKSSTNNKIYIYSSGSIKAQILLFGHVKSTTTTTTTTTTITNEVIDLNPKLNGYFDITTAGFKNQSNSYKKILQEINKSSTPKSVLFLSDNINEVNAAIEAGMKSYIVIRPGNPPIDDDDDGNDDKINHKIIYSLDELDL</sequence>
<accession>C4YJE1</accession>
<keyword id="KW-0028">Amino-acid biosynthesis</keyword>
<keyword id="KW-0963">Cytoplasm</keyword>
<keyword id="KW-0378">Hydrolase</keyword>
<keyword id="KW-0460">Magnesium</keyword>
<keyword id="KW-0479">Metal-binding</keyword>
<keyword id="KW-0486">Methionine biosynthesis</keyword>
<keyword id="KW-0539">Nucleus</keyword>
<protein>
    <recommendedName>
        <fullName evidence="1">Enolase-phosphatase E1</fullName>
        <ecNumber evidence="1">3.1.3.77</ecNumber>
    </recommendedName>
    <alternativeName>
        <fullName evidence="1">2,3-diketo-5-methylthio-1-phosphopentane phosphatase</fullName>
    </alternativeName>
</protein>
<proteinExistence type="inferred from homology"/>
<dbReference type="EC" id="3.1.3.77" evidence="1"/>
<dbReference type="EMBL" id="CH672350">
    <property type="protein sequence ID" value="EEQ45625.1"/>
    <property type="molecule type" value="Genomic_DNA"/>
</dbReference>
<dbReference type="SMR" id="C4YJE1"/>
<dbReference type="PaxDb" id="5476-C4YJE1"/>
<dbReference type="VEuPathDB" id="FungiDB:CAWG_03954"/>
<dbReference type="HOGENOM" id="CLU_023273_1_1_1"/>
<dbReference type="OMA" id="LQGMVWE"/>
<dbReference type="OrthoDB" id="16167at766764"/>
<dbReference type="UniPathway" id="UPA00904">
    <property type="reaction ID" value="UER00876"/>
</dbReference>
<dbReference type="UniPathway" id="UPA00904">
    <property type="reaction ID" value="UER00877"/>
</dbReference>
<dbReference type="Proteomes" id="UP000001429">
    <property type="component" value="Chromosome 2, Supercontig 1.5"/>
</dbReference>
<dbReference type="GO" id="GO:0005737">
    <property type="term" value="C:cytoplasm"/>
    <property type="evidence" value="ECO:0007669"/>
    <property type="project" value="UniProtKB-SubCell"/>
</dbReference>
<dbReference type="GO" id="GO:0005634">
    <property type="term" value="C:nucleus"/>
    <property type="evidence" value="ECO:0007669"/>
    <property type="project" value="UniProtKB-SubCell"/>
</dbReference>
<dbReference type="GO" id="GO:0043874">
    <property type="term" value="F:acireductone synthase activity"/>
    <property type="evidence" value="ECO:0007669"/>
    <property type="project" value="UniProtKB-EC"/>
</dbReference>
<dbReference type="GO" id="GO:0000287">
    <property type="term" value="F:magnesium ion binding"/>
    <property type="evidence" value="ECO:0007669"/>
    <property type="project" value="UniProtKB-UniRule"/>
</dbReference>
<dbReference type="GO" id="GO:0019509">
    <property type="term" value="P:L-methionine salvage from methylthioadenosine"/>
    <property type="evidence" value="ECO:0007669"/>
    <property type="project" value="UniProtKB-UniRule"/>
</dbReference>
<dbReference type="Gene3D" id="1.10.720.60">
    <property type="match status" value="1"/>
</dbReference>
<dbReference type="Gene3D" id="3.40.50.1000">
    <property type="entry name" value="HAD superfamily/HAD-like"/>
    <property type="match status" value="1"/>
</dbReference>
<dbReference type="HAMAP" id="MF_03117">
    <property type="entry name" value="Salvage_MtnC_euk"/>
    <property type="match status" value="1"/>
</dbReference>
<dbReference type="InterPro" id="IPR023943">
    <property type="entry name" value="Enolase-ppase_E1"/>
</dbReference>
<dbReference type="InterPro" id="IPR027511">
    <property type="entry name" value="ENOPH1_eukaryotes"/>
</dbReference>
<dbReference type="InterPro" id="IPR036412">
    <property type="entry name" value="HAD-like_sf"/>
</dbReference>
<dbReference type="InterPro" id="IPR023214">
    <property type="entry name" value="HAD_sf"/>
</dbReference>
<dbReference type="NCBIfam" id="TIGR01691">
    <property type="entry name" value="enolase-ppase"/>
    <property type="match status" value="1"/>
</dbReference>
<dbReference type="PANTHER" id="PTHR20371">
    <property type="entry name" value="ENOLASE-PHOSPHATASE E1"/>
    <property type="match status" value="1"/>
</dbReference>
<dbReference type="PANTHER" id="PTHR20371:SF1">
    <property type="entry name" value="ENOLASE-PHOSPHATASE E1"/>
    <property type="match status" value="1"/>
</dbReference>
<dbReference type="Pfam" id="PF00702">
    <property type="entry name" value="Hydrolase"/>
    <property type="match status" value="1"/>
</dbReference>
<dbReference type="SFLD" id="SFLDG01133">
    <property type="entry name" value="C1.5.4:_Enolase-phosphatase_Li"/>
    <property type="match status" value="1"/>
</dbReference>
<dbReference type="SFLD" id="SFLDG01129">
    <property type="entry name" value="C1.5:_HAD__Beta-PGM__Phosphata"/>
    <property type="match status" value="1"/>
</dbReference>
<dbReference type="SUPFAM" id="SSF56784">
    <property type="entry name" value="HAD-like"/>
    <property type="match status" value="1"/>
</dbReference>